<feature type="chain" id="PRO_0000447778" description="Magnetosome formation protease MamE">
    <location>
        <begin position="1"/>
        <end position="772"/>
    </location>
</feature>
<feature type="topological domain" description="Cytoplasmic" evidence="15">
    <location>
        <begin position="1"/>
        <end position="21"/>
    </location>
</feature>
<feature type="transmembrane region" description="Helical" evidence="3">
    <location>
        <begin position="22"/>
        <end position="42"/>
    </location>
</feature>
<feature type="topological domain" description="Lumenal" evidence="15">
    <location>
        <begin position="43"/>
        <end position="772"/>
    </location>
</feature>
<feature type="domain" description="Cytochrome c" evidence="5">
    <location>
        <begin position="445"/>
        <end position="558"/>
    </location>
</feature>
<feature type="domain" description="PDZ 1" evidence="4">
    <location>
        <begin position="522"/>
        <end position="626"/>
    </location>
</feature>
<feature type="domain" description="PDZ 2" evidence="4">
    <location>
        <begin position="696"/>
        <end position="765"/>
    </location>
</feature>
<feature type="short sequence motif" description="MCR (magnetochrome) 1" evidence="19">
    <location>
        <begin position="374"/>
        <end position="397"/>
    </location>
</feature>
<feature type="short sequence motif" description="MCR 2" evidence="15">
    <location>
        <begin position="420"/>
        <end position="443"/>
    </location>
</feature>
<feature type="short sequence motif" description="MCR 3" evidence="19">
    <location>
        <begin position="470"/>
        <end position="494"/>
    </location>
</feature>
<feature type="active site" description="Charge relay system" evidence="1">
    <location>
        <position position="187"/>
    </location>
</feature>
<feature type="active site" description="Charge relay system" evidence="1">
    <location>
        <position position="220"/>
    </location>
</feature>
<feature type="active site" description="Charge relay system" evidence="1">
    <location>
        <position position="296"/>
    </location>
</feature>
<feature type="binding site" description="covalent" evidence="5 19">
    <location>
        <position position="391"/>
    </location>
    <ligand>
        <name>heme</name>
        <dbReference type="ChEBI" id="CHEBI:30413"/>
        <label>1</label>
    </ligand>
</feature>
<feature type="binding site" description="covalent" evidence="5 19">
    <location>
        <position position="394"/>
    </location>
    <ligand>
        <name>heme</name>
        <dbReference type="ChEBI" id="CHEBI:30413"/>
        <label>1</label>
    </ligand>
</feature>
<feature type="binding site" description="axial binding residue" evidence="5 19">
    <location>
        <position position="395"/>
    </location>
    <ligand>
        <name>heme</name>
        <dbReference type="ChEBI" id="CHEBI:30413"/>
        <label>1</label>
    </ligand>
    <ligandPart>
        <name>Fe</name>
        <dbReference type="ChEBI" id="CHEBI:18248"/>
    </ligandPart>
</feature>
<feature type="binding site" description="covalent" evidence="5 15">
    <location>
        <position position="437"/>
    </location>
    <ligand>
        <name>heme</name>
        <dbReference type="ChEBI" id="CHEBI:30413"/>
        <label>2</label>
    </ligand>
</feature>
<feature type="binding site" description="covalent" evidence="5 15">
    <location>
        <position position="440"/>
    </location>
    <ligand>
        <name>heme</name>
        <dbReference type="ChEBI" id="CHEBI:30413"/>
        <label>2</label>
    </ligand>
</feature>
<feature type="binding site" description="axial binding residue" evidence="5 15">
    <location>
        <position position="441"/>
    </location>
    <ligand>
        <name>heme</name>
        <dbReference type="ChEBI" id="CHEBI:30413"/>
        <label>2</label>
    </ligand>
    <ligandPart>
        <name>Fe</name>
        <dbReference type="ChEBI" id="CHEBI:18248"/>
    </ligandPart>
</feature>
<feature type="binding site" description="covalent" evidence="5 19">
    <location>
        <position position="488"/>
    </location>
    <ligand>
        <name>heme</name>
        <dbReference type="ChEBI" id="CHEBI:30413"/>
        <label>3</label>
    </ligand>
</feature>
<feature type="binding site" description="covalent" evidence="5 19">
    <location>
        <position position="491"/>
    </location>
    <ligand>
        <name>heme</name>
        <dbReference type="ChEBI" id="CHEBI:30413"/>
        <label>3</label>
    </ligand>
</feature>
<feature type="binding site" description="axial binding residue" evidence="5 19">
    <location>
        <position position="492"/>
    </location>
    <ligand>
        <name>heme</name>
        <dbReference type="ChEBI" id="CHEBI:30413"/>
        <label>3</label>
    </ligand>
    <ligandPart>
        <name>Fe</name>
        <dbReference type="ChEBI" id="CHEBI:18248"/>
    </ligandPart>
</feature>
<feature type="sequence conflict" description="In Ref. 5; AA sequence." evidence="15" ref="5">
    <original>G</original>
    <variation>R</variation>
    <location>
        <position position="12"/>
    </location>
</feature>
<dbReference type="EC" id="3.4.21.-" evidence="2"/>
<dbReference type="EMBL" id="BX571797">
    <property type="protein sequence ID" value="CAE12032.1"/>
    <property type="molecule type" value="Genomic_DNA"/>
</dbReference>
<dbReference type="EMBL" id="AM085146">
    <property type="protein sequence ID" value="CAJ30116.1"/>
    <property type="molecule type" value="Genomic_DNA"/>
</dbReference>
<dbReference type="EMBL" id="CU459003">
    <property type="protein sequence ID" value="CAM78023.1"/>
    <property type="molecule type" value="Genomic_DNA"/>
</dbReference>
<dbReference type="EMBL" id="HG794546">
    <property type="protein sequence ID" value="CDK99594.1"/>
    <property type="molecule type" value="Genomic_DNA"/>
</dbReference>
<dbReference type="RefSeq" id="WP_024080590.1">
    <property type="nucleotide sequence ID" value="NZ_CP027526.1"/>
</dbReference>
<dbReference type="SMR" id="V6F2B6"/>
<dbReference type="STRING" id="1430440.MGMSRv2__2379"/>
<dbReference type="KEGG" id="mgry:MSR1_03360"/>
<dbReference type="KEGG" id="mgy:MGMSRv2__2379"/>
<dbReference type="eggNOG" id="COG0265">
    <property type="taxonomic scope" value="Bacteria"/>
</dbReference>
<dbReference type="HOGENOM" id="CLU_020120_1_0_5"/>
<dbReference type="OrthoDB" id="7313317at2"/>
<dbReference type="Proteomes" id="UP000018922">
    <property type="component" value="Chromosome I"/>
</dbReference>
<dbReference type="GO" id="GO:0110146">
    <property type="term" value="C:magnetosome membrane"/>
    <property type="evidence" value="ECO:0000314"/>
    <property type="project" value="UniProtKB"/>
</dbReference>
<dbReference type="GO" id="GO:0009055">
    <property type="term" value="F:electron transfer activity"/>
    <property type="evidence" value="ECO:0007669"/>
    <property type="project" value="InterPro"/>
</dbReference>
<dbReference type="GO" id="GO:0020037">
    <property type="term" value="F:heme binding"/>
    <property type="evidence" value="ECO:0007669"/>
    <property type="project" value="InterPro"/>
</dbReference>
<dbReference type="GO" id="GO:0046872">
    <property type="term" value="F:metal ion binding"/>
    <property type="evidence" value="ECO:0007669"/>
    <property type="project" value="UniProtKB-KW"/>
</dbReference>
<dbReference type="GO" id="GO:0004252">
    <property type="term" value="F:serine-type endopeptidase activity"/>
    <property type="evidence" value="ECO:0000250"/>
    <property type="project" value="UniProtKB"/>
</dbReference>
<dbReference type="GO" id="GO:0006508">
    <property type="term" value="P:proteolysis"/>
    <property type="evidence" value="ECO:0007669"/>
    <property type="project" value="UniProtKB-KW"/>
</dbReference>
<dbReference type="CDD" id="cd23087">
    <property type="entry name" value="cpPDZ1_MamE-like"/>
    <property type="match status" value="1"/>
</dbReference>
<dbReference type="CDD" id="cd23086">
    <property type="entry name" value="cpPDZ2_MamE-like"/>
    <property type="match status" value="1"/>
</dbReference>
<dbReference type="Gene3D" id="2.30.42.10">
    <property type="match status" value="2"/>
</dbReference>
<dbReference type="Gene3D" id="2.30.42.60">
    <property type="match status" value="1"/>
</dbReference>
<dbReference type="Gene3D" id="2.40.10.120">
    <property type="match status" value="1"/>
</dbReference>
<dbReference type="InterPro" id="IPR051201">
    <property type="entry name" value="Chloro_Bact_Ser_Proteases"/>
</dbReference>
<dbReference type="InterPro" id="IPR009056">
    <property type="entry name" value="Cyt_c-like_dom"/>
</dbReference>
<dbReference type="InterPro" id="IPR040963">
    <property type="entry name" value="MCR"/>
</dbReference>
<dbReference type="InterPro" id="IPR036280">
    <property type="entry name" value="Multihaem_cyt_sf"/>
</dbReference>
<dbReference type="InterPro" id="IPR001478">
    <property type="entry name" value="PDZ"/>
</dbReference>
<dbReference type="InterPro" id="IPR041489">
    <property type="entry name" value="PDZ_6"/>
</dbReference>
<dbReference type="InterPro" id="IPR036034">
    <property type="entry name" value="PDZ_sf"/>
</dbReference>
<dbReference type="InterPro" id="IPR009003">
    <property type="entry name" value="Peptidase_S1_PA"/>
</dbReference>
<dbReference type="InterPro" id="IPR001940">
    <property type="entry name" value="Peptidase_S1C"/>
</dbReference>
<dbReference type="NCBIfam" id="NF040960">
    <property type="entry name" value="MamE"/>
    <property type="match status" value="1"/>
</dbReference>
<dbReference type="PANTHER" id="PTHR43343">
    <property type="entry name" value="PEPTIDASE S12"/>
    <property type="match status" value="1"/>
</dbReference>
<dbReference type="PANTHER" id="PTHR43343:SF3">
    <property type="entry name" value="PROTEASE DO-LIKE 8, CHLOROPLASTIC"/>
    <property type="match status" value="1"/>
</dbReference>
<dbReference type="Pfam" id="PF18509">
    <property type="entry name" value="MCR"/>
    <property type="match status" value="3"/>
</dbReference>
<dbReference type="Pfam" id="PF00595">
    <property type="entry name" value="PDZ"/>
    <property type="match status" value="1"/>
</dbReference>
<dbReference type="Pfam" id="PF17820">
    <property type="entry name" value="PDZ_6"/>
    <property type="match status" value="1"/>
</dbReference>
<dbReference type="Pfam" id="PF13365">
    <property type="entry name" value="Trypsin_2"/>
    <property type="match status" value="1"/>
</dbReference>
<dbReference type="PRINTS" id="PR00834">
    <property type="entry name" value="PROTEASES2C"/>
</dbReference>
<dbReference type="SMART" id="SM00228">
    <property type="entry name" value="PDZ"/>
    <property type="match status" value="2"/>
</dbReference>
<dbReference type="SUPFAM" id="SSF48695">
    <property type="entry name" value="Multiheme cytochromes"/>
    <property type="match status" value="1"/>
</dbReference>
<dbReference type="SUPFAM" id="SSF50156">
    <property type="entry name" value="PDZ domain-like"/>
    <property type="match status" value="2"/>
</dbReference>
<dbReference type="SUPFAM" id="SSF50494">
    <property type="entry name" value="Trypsin-like serine proteases"/>
    <property type="match status" value="1"/>
</dbReference>
<dbReference type="PROSITE" id="PS51007">
    <property type="entry name" value="CYTC"/>
    <property type="match status" value="1"/>
</dbReference>
<dbReference type="PROSITE" id="PS51008">
    <property type="entry name" value="MULTIHEME_CYTC"/>
    <property type="match status" value="1"/>
</dbReference>
<dbReference type="PROSITE" id="PS50106">
    <property type="entry name" value="PDZ"/>
    <property type="match status" value="2"/>
</dbReference>
<organism>
    <name type="scientific">Magnetospirillum gryphiswaldense (strain DSM 6361 / JCM 21280 / NBRC 15271 / MSR-1)</name>
    <dbReference type="NCBI Taxonomy" id="431944"/>
    <lineage>
        <taxon>Bacteria</taxon>
        <taxon>Pseudomonadati</taxon>
        <taxon>Pseudomonadota</taxon>
        <taxon>Alphaproteobacteria</taxon>
        <taxon>Rhodospirillales</taxon>
        <taxon>Rhodospirillaceae</taxon>
        <taxon>Magnetospirillum</taxon>
    </lineage>
</organism>
<name>MAME_MAGGM</name>
<protein>
    <recommendedName>
        <fullName evidence="15">Magnetosome formation protease MamE</fullName>
        <ecNumber evidence="2">3.4.21.-</ecNumber>
    </recommendedName>
    <alternativeName>
        <fullName evidence="12">MM36.3</fullName>
    </alternativeName>
    <alternativeName>
        <fullName evidence="14">Magnetochrome MamE</fullName>
    </alternativeName>
    <alternativeName>
        <fullName evidence="15">Magnetosome serine protease MamE</fullName>
    </alternativeName>
</protein>
<sequence>MTMFNGDVEDGGRSNVSCGKDLKRYLMLMGVVALVVLFGAFIYRQSSGGLRLGAMMEQMTGARGAVNVPAQHGAPSAVVDPAMSVPARARVAPPSAAGAIATFPPVVDFGPAPVVSGGPFTGVVTLLRNSVVSVTASSSGGQVMPDPLGLVNPDGLPRFANPTTRSVENIGTGVIVRNDGFIVTNYHVVRGANSVYVTVKDDVGSIRYSGEIVKMDEALDLALLKITPKVQLTAAVLGDSDAVNVADEVIAIGTPFGLDMTVSRGIISAKRKTMVIEGMTHSNLLQTDAAINQGNSGGPLVAANGTVVGINTAIYTPNGAFAGIGFAVPSNQARLFALDEVGWLPTSTAEGPAMGLVAMQRPMGVGVGAAGPVIAAGTPSPHVDGRQNMDCSNCHDIIPAGNGFQAPMMPVAAPVPPPPIPANAVSPHTDGRQNMTCNTCHQFVGGAAAGPIAFGQPMMPIAAPQQPAPAIRANAANPHTDGRQNMNCASCHQIIGSVGAAPIAAPGAGGAYRFSQPPGSLAINIQGPRGGQGAVAGSGGSRASLLGAALTPLTQRLGLQANLPAGRGVFVNGVTPNTPAASAGLRPGDVILKVDGRPVHQPEEVAAIMAEMPNGRSVRIGVLRAGDVSNMSLVTGPSGLAAAVVQAPTAPVVMAGGAPTVPGVQPVIPKVPTEFNWLGMEIETFMAPQPVVGMPGATPVAGGGKGAQVAEVLAGSRAAVAGLQANDLIIEVNNRPVTSPARLDAAIKAATAAGQQILLKVHRNGQEFWIVL</sequence>
<accession>V6F2B6</accession>
<accession>Q6NE61</accession>
<proteinExistence type="evidence at protein level"/>
<gene>
    <name evidence="13" type="primary">mamE</name>
    <name type="ordered locus">MGMSRv2__2379</name>
    <name type="ORF">mgI487</name>
    <name type="ORF">MGR_4091</name>
</gene>
<evidence type="ECO:0000250" key="1">
    <source>
        <dbReference type="UniProtKB" id="P0C0V0"/>
    </source>
</evidence>
<evidence type="ECO:0000250" key="2">
    <source>
        <dbReference type="UniProtKB" id="Q2W8Q8"/>
    </source>
</evidence>
<evidence type="ECO:0000255" key="3"/>
<evidence type="ECO:0000255" key="4">
    <source>
        <dbReference type="PROSITE-ProRule" id="PRU00143"/>
    </source>
</evidence>
<evidence type="ECO:0000255" key="5">
    <source>
        <dbReference type="PROSITE-ProRule" id="PRU00433"/>
    </source>
</evidence>
<evidence type="ECO:0000269" key="6">
    <source>
    </source>
</evidence>
<evidence type="ECO:0000269" key="7">
    <source>
    </source>
</evidence>
<evidence type="ECO:0000269" key="8">
    <source>
    </source>
</evidence>
<evidence type="ECO:0000269" key="9">
    <source>
    </source>
</evidence>
<evidence type="ECO:0000269" key="10">
    <source>
    </source>
</evidence>
<evidence type="ECO:0000269" key="11">
    <source>
    </source>
</evidence>
<evidence type="ECO:0000303" key="12">
    <source>
    </source>
</evidence>
<evidence type="ECO:0000303" key="13">
    <source>
    </source>
</evidence>
<evidence type="ECO:0000303" key="14">
    <source>
    </source>
</evidence>
<evidence type="ECO:0000305" key="15"/>
<evidence type="ECO:0000305" key="16">
    <source>
    </source>
</evidence>
<evidence type="ECO:0000305" key="17">
    <source>
    </source>
</evidence>
<evidence type="ECO:0000305" key="18">
    <source>
    </source>
</evidence>
<evidence type="ECO:0000305" key="19">
    <source>
    </source>
</evidence>
<comment type="function">
    <text evidence="2 9 11">Acts at 2 distinct steps of magnetosome formation; required for correct localization of proteins to the magnetosome while the protease activity is required for maturation of small magnetite crystals into larger, functional ones (By similarity) (PubMed:20674739). Probably cleaves at least itself, MamO and MamP; cleavage requires the putative transprot domain of MamO (By similarity). Involved in localization of some proteins (at least MamA, MamC, MamF, MamI and MamJ) to the magnetosome (By similarity). One of 7 genes (mamLQBIEMO) able to induce magnetosome membrane biogenesis; coexpression of mamLQRBIEMO in a deletion of the 17 gene mamAB operon restores magnetosome vesicle formation but not magnetite biosynthesis (PubMed:27286560).</text>
</comment>
<comment type="cofactor">
    <cofactor evidence="19">
        <name>heme</name>
        <dbReference type="ChEBI" id="CHEBI:30413"/>
    </cofactor>
    <text evidence="15 19">Probably binds 2-3 heme groups via the 3 magnetochrome (MCR) motifs.</text>
</comment>
<comment type="subunit">
    <text evidence="18">Might interact with MamB via PDZ1.</text>
</comment>
<comment type="subcellular location">
    <subcellularLocation>
        <location evidence="6 8">Magnetosome membrane</location>
        <topology evidence="3">Single-pass membrane protein</topology>
    </subcellularLocation>
    <text evidence="6">Purified magnetosomes remain attached to each other.</text>
</comment>
<comment type="induction">
    <text evidence="17">Part of the probable 17 gene mamAB operon.</text>
</comment>
<comment type="PTM">
    <text evidence="2 6">The protein isolated from magnetosome membranes has a molecular weight of about 36.3 kDa, probably due to C-terminal cleavage (PubMed:11571158). Subject to autocatalytic cleavage; cleavage also requires MamO; these may be the same event (By similarity).</text>
</comment>
<comment type="disruption phenotype">
    <text evidence="7 9">Single gene deletion, loss of magnetic response, about 35% iron content. Forms magnetosome chains without magnetosome crystals (PubMed:20674739). Deletion of approximately 80 kb of DNA, including this operon, leads to cells that are non-magnetic, lack internal membrane systems, grow poorly, have reduced mobility and take-up and accumulate iron poorly (PubMed:13129949).</text>
</comment>
<comment type="miscellaneous">
    <text evidence="15">There is a third MCR motif in this protein (470-494) that is not present in the M.magneticum strain AMB-1 MamE ortholog.</text>
</comment>
<comment type="miscellaneous">
    <text evidence="16">This bacteria makes up to 60 cubo-octahedral magnetosomes of about 45 nm in diameter which contain membrane-bound crystals of magnetite (Fe(3)O(4)).</text>
</comment>
<comment type="miscellaneous">
    <text evidence="10">Expression of just the minimal mamAB gene cluster (MGMSRv2__2365 to MGMSRv2__2381), including this gene, is sufficient to form a minimal magnetosome chain with small magnetite particles.</text>
</comment>
<comment type="similarity">
    <text evidence="15">In the N-terminal section; belongs to the peptidase S1C family.</text>
</comment>
<keyword id="KW-0068">Autocatalytic cleavage</keyword>
<keyword id="KW-0091">Biomineralization</keyword>
<keyword id="KW-0903">Direct protein sequencing</keyword>
<keyword id="KW-0349">Heme</keyword>
<keyword id="KW-0378">Hydrolase</keyword>
<keyword id="KW-0408">Iron</keyword>
<keyword id="KW-1281">Magnetosome</keyword>
<keyword id="KW-0472">Membrane</keyword>
<keyword id="KW-0479">Metal-binding</keyword>
<keyword id="KW-0645">Protease</keyword>
<keyword id="KW-1185">Reference proteome</keyword>
<keyword id="KW-0677">Repeat</keyword>
<keyword id="KW-0812">Transmembrane</keyword>
<keyword id="KW-1133">Transmembrane helix</keyword>
<reference key="1">
    <citation type="journal article" date="2003" name="J. Bacteriol.">
        <title>Characterization of a spontaneous nonmagnetic mutant of Magnetospirillum gryphiswaldense reveals a large deletion comprising a putative magnetosome island.</title>
        <authorList>
            <person name="Schuebbe S."/>
            <person name="Kube M."/>
            <person name="Scheffel A."/>
            <person name="Wawer C."/>
            <person name="Heyen U."/>
            <person name="Meyerdierks A."/>
            <person name="Madkour M.H."/>
            <person name="Mayer F."/>
            <person name="Reinhardt R."/>
            <person name="Schueler D."/>
        </authorList>
    </citation>
    <scope>NUCLEOTIDE SEQUENCE [GENOMIC DNA]</scope>
    <scope>PROBABLE OPERON</scope>
    <scope>DISRUPTION PHENOTYPE</scope>
    <source>
        <strain>DSM 6361 / JCM 21280 / NBRC 15271 / MSR-1</strain>
    </source>
</reference>
<reference key="2">
    <citation type="journal article" date="2005" name="J. Bacteriol.">
        <title>A hypervariable 130-kilobase genomic region of Magnetospirillum gryphiswaldense comprises a magnetosome island which undergoes frequent rearrangements during stationary growth.</title>
        <authorList>
            <person name="Ullrich S."/>
            <person name="Kube M."/>
            <person name="Schuebbe S."/>
            <person name="Reinhardt R."/>
            <person name="Schueler D."/>
        </authorList>
    </citation>
    <scope>NUCLEOTIDE SEQUENCE [GENOMIC DNA]</scope>
    <source>
        <strain>DSM 6361 / JCM 21280 / NBRC 15271 / MSR-1</strain>
    </source>
</reference>
<reference key="3">
    <citation type="journal article" date="2007" name="J. Bacteriol.">
        <title>Comparative genome analysis of four magnetotactic bacteria reveals a complex set of group-specific genes implicated in magnetosome biomineralization and function.</title>
        <authorList>
            <person name="Richter M."/>
            <person name="Kube M."/>
            <person name="Bazylinski D.A."/>
            <person name="Lombardot T."/>
            <person name="Gloeckner F.O."/>
            <person name="Reinhardt R."/>
            <person name="Schueler D."/>
        </authorList>
    </citation>
    <scope>NUCLEOTIDE SEQUENCE [LARGE SCALE GENOMIC DNA]</scope>
    <source>
        <strain>DSM 6361 / JCM 21280 / NBRC 15271 / MSR-1</strain>
    </source>
</reference>
<reference key="4">
    <citation type="journal article" date="2014" name="Genome Announc.">
        <title>Complete genome sequence of Magnetospirillum gryphiswaldense MSR-1.</title>
        <authorList>
            <person name="Wang X."/>
            <person name="Wang Q."/>
            <person name="Zhang W."/>
            <person name="Wang Y."/>
            <person name="Li L."/>
            <person name="Wen T."/>
            <person name="Zhang T."/>
            <person name="Zhang Y."/>
            <person name="Xu J."/>
            <person name="Hu J."/>
            <person name="Li S."/>
            <person name="Liu L."/>
            <person name="Liu J."/>
            <person name="Jiang W."/>
            <person name="Tian J."/>
            <person name="Li Y."/>
            <person name="Schuler D."/>
            <person name="Wang L."/>
            <person name="Li J."/>
        </authorList>
    </citation>
    <scope>NUCLEOTIDE SEQUENCE [LARGE SCALE GENOMIC DNA]</scope>
    <source>
        <strain>DSM 6361 / JCM 21280 / NBRC 15271 / MSR-1</strain>
    </source>
</reference>
<reference key="5">
    <citation type="journal article" date="2001" name="Appl. Environ. Microbiol.">
        <title>A large gene cluster encoding several magnetosome proteins is conserved in different species of magnetotactic bacteria.</title>
        <authorList>
            <person name="Grunberg K."/>
            <person name="Wawer C."/>
            <person name="Tebo B.M."/>
            <person name="Schuler D."/>
        </authorList>
    </citation>
    <scope>PROTEIN SEQUENCE OF 3-21</scope>
    <scope>SUBCELLULAR LOCATION</scope>
    <scope>POSSIBLE CLEAVAGE</scope>
    <source>
        <strain>DSM 6361 / JCM 21280 / NBRC 15271 / MSR-1</strain>
    </source>
</reference>
<reference key="6">
    <citation type="journal article" date="2004" name="Appl. Environ. Microbiol.">
        <title>Biochemical and proteomic analysis of the magnetosome membrane in Magnetospirillum gryphiswaldense.</title>
        <authorList>
            <person name="Gruenberg K."/>
            <person name="Mueller E.C."/>
            <person name="Otto A."/>
            <person name="Reszka R."/>
            <person name="Linder D."/>
            <person name="Kube M."/>
            <person name="Reinhardt R."/>
            <person name="Schueler D."/>
        </authorList>
    </citation>
    <scope>SUBCELLULAR LOCATION</scope>
    <scope>IDENTIFICATION BY MASS SPECTROMETRY</scope>
    <source>
        <strain>DSM 6361 / JCM 21280 / NBRC 15271 / MSR-1</strain>
    </source>
</reference>
<reference key="7">
    <citation type="journal article" date="2010" name="Res. Microbiol.">
        <title>mamO and mamE genes are essential for magnetosome crystal biomineralization in Magnetospirillum gryphiswaldense MSR-1.</title>
        <authorList>
            <person name="Yang W."/>
            <person name="Li R."/>
            <person name="Peng T."/>
            <person name="Zhang Y."/>
            <person name="Jiang W."/>
            <person name="Li Y."/>
            <person name="Li J."/>
        </authorList>
    </citation>
    <scope>FUNCTION</scope>
    <scope>DISRUPTION PHENOTYPE</scope>
    <source>
        <strain>DSM 6361 / JCM 21280 / NBRC 15271 / MSR-1</strain>
    </source>
</reference>
<reference key="8">
    <citation type="journal article" date="2011" name="Mol. Microbiol.">
        <title>The cation diffusion facilitator proteins MamB and MamM of Magnetospirillum gryphiswaldense have distinct and complex functions, and are involved in magnetite biomineralization and magnetosome membrane assembly.</title>
        <authorList>
            <person name="Uebe R."/>
            <person name="Junge K."/>
            <person name="Henn V."/>
            <person name="Poxleitner G."/>
            <person name="Katzmann E."/>
            <person name="Plitzko J.M."/>
            <person name="Zarivach R."/>
            <person name="Kasama T."/>
            <person name="Wanner G."/>
            <person name="Posfai M."/>
            <person name="Boettger L."/>
            <person name="Matzanke B."/>
            <person name="Schueler D."/>
        </authorList>
    </citation>
    <scope>SUBUNIT</scope>
    <source>
        <strain>DSM 6361 / JCM 21280 / NBRC 15271 / MSR-1</strain>
    </source>
</reference>
<reference key="9">
    <citation type="journal article" date="2011" name="PLoS ONE">
        <title>Functional analysis of the magnetosome island in Magnetospirillum gryphiswaldense: the mamAB operon is sufficient for magnetite biomineralization.</title>
        <authorList>
            <person name="Lohsse A."/>
            <person name="Ullrich S."/>
            <person name="Katzmann E."/>
            <person name="Borg S."/>
            <person name="Wanner G."/>
            <person name="Richter M."/>
            <person name="Voigt B."/>
            <person name="Schweder T."/>
            <person name="Schueler D."/>
        </authorList>
    </citation>
    <scope>MINIMAL MAGNETOSOME ISLAND</scope>
    <scope>PROBABLE OPERON</scope>
    <scope>DISRUPTION PHENOTYPE</scope>
    <source>
        <strain>DSM 6361 / JCM 21280 / NBRC 15271 / MSR-1</strain>
    </source>
</reference>
<reference key="10">
    <citation type="journal article" date="2012" name="Biochem. Soc. Trans.">
        <title>Magnetochrome: a c-type cytochrome domain specific to magnetotatic bacteria.</title>
        <authorList>
            <person name="Siponen M.I."/>
            <person name="Adryanczyk G."/>
            <person name="Ginet N."/>
            <person name="Arnoux P."/>
            <person name="Pignol D."/>
        </authorList>
    </citation>
    <scope>POSSIBLE COFACTOR</scope>
    <scope>DOMAIN</scope>
    <source>
        <strain>DSM 6361 / JCM 21280 / NBRC 15271 / MSR-1</strain>
    </source>
</reference>
<reference key="11">
    <citation type="journal article" date="2016" name="PLoS Genet.">
        <title>Genetic and Ultrastructural Analysis Reveals the Key Players and Initial Steps of Bacterial Magnetosome Membrane Biogenesis.</title>
        <authorList>
            <person name="Raschdorf O."/>
            <person name="Forstner Y."/>
            <person name="Kolinko I."/>
            <person name="Uebe R."/>
            <person name="Plitzko J.M."/>
            <person name="Schueler D."/>
        </authorList>
    </citation>
    <scope>FUNCTION</scope>
    <scope>MINIMAL VESICLE FORMATION GENES</scope>
    <source>
        <strain>DSM 6361 / JCM 21280 / NBRC 15271 / MSR-1</strain>
    </source>
</reference>